<feature type="chain" id="PRO_1000014975" description="Small ribosomal subunit protein uS10">
    <location>
        <begin position="1"/>
        <end position="103"/>
    </location>
</feature>
<comment type="function">
    <text evidence="1">Involved in the binding of tRNA to the ribosomes.</text>
</comment>
<comment type="subunit">
    <text evidence="1">Part of the 30S ribosomal subunit.</text>
</comment>
<comment type="similarity">
    <text evidence="1">Belongs to the universal ribosomal protein uS10 family.</text>
</comment>
<sequence>MSKQKIRIRLKAFDYKLIDQSAAEIVDTAKRTGAIVKGPVPLPTRMKRFDILRSPHVNKTSRDQFEIRTHQRLMDIVDPTDKTVDALMKLDLPAGVDVEIKLQ</sequence>
<keyword id="KW-0687">Ribonucleoprotein</keyword>
<keyword id="KW-0689">Ribosomal protein</keyword>
<evidence type="ECO:0000255" key="1">
    <source>
        <dbReference type="HAMAP-Rule" id="MF_00508"/>
    </source>
</evidence>
<evidence type="ECO:0000305" key="2"/>
<accession>A1TJ06</accession>
<dbReference type="EMBL" id="CP000512">
    <property type="protein sequence ID" value="ABM30944.1"/>
    <property type="molecule type" value="Genomic_DNA"/>
</dbReference>
<dbReference type="RefSeq" id="WP_003059431.1">
    <property type="nucleotide sequence ID" value="NC_008752.1"/>
</dbReference>
<dbReference type="SMR" id="A1TJ06"/>
<dbReference type="STRING" id="397945.Aave_0337"/>
<dbReference type="GeneID" id="94689732"/>
<dbReference type="KEGG" id="aav:Aave_0337"/>
<dbReference type="eggNOG" id="COG0051">
    <property type="taxonomic scope" value="Bacteria"/>
</dbReference>
<dbReference type="HOGENOM" id="CLU_122625_1_3_4"/>
<dbReference type="OrthoDB" id="9804464at2"/>
<dbReference type="Proteomes" id="UP000002596">
    <property type="component" value="Chromosome"/>
</dbReference>
<dbReference type="GO" id="GO:1990904">
    <property type="term" value="C:ribonucleoprotein complex"/>
    <property type="evidence" value="ECO:0007669"/>
    <property type="project" value="UniProtKB-KW"/>
</dbReference>
<dbReference type="GO" id="GO:0005840">
    <property type="term" value="C:ribosome"/>
    <property type="evidence" value="ECO:0007669"/>
    <property type="project" value="UniProtKB-KW"/>
</dbReference>
<dbReference type="GO" id="GO:0003735">
    <property type="term" value="F:structural constituent of ribosome"/>
    <property type="evidence" value="ECO:0007669"/>
    <property type="project" value="InterPro"/>
</dbReference>
<dbReference type="GO" id="GO:0000049">
    <property type="term" value="F:tRNA binding"/>
    <property type="evidence" value="ECO:0007669"/>
    <property type="project" value="UniProtKB-UniRule"/>
</dbReference>
<dbReference type="GO" id="GO:0006412">
    <property type="term" value="P:translation"/>
    <property type="evidence" value="ECO:0007669"/>
    <property type="project" value="UniProtKB-UniRule"/>
</dbReference>
<dbReference type="FunFam" id="3.30.70.600:FF:000001">
    <property type="entry name" value="30S ribosomal protein S10"/>
    <property type="match status" value="1"/>
</dbReference>
<dbReference type="Gene3D" id="3.30.70.600">
    <property type="entry name" value="Ribosomal protein S10 domain"/>
    <property type="match status" value="1"/>
</dbReference>
<dbReference type="HAMAP" id="MF_00508">
    <property type="entry name" value="Ribosomal_uS10"/>
    <property type="match status" value="1"/>
</dbReference>
<dbReference type="InterPro" id="IPR001848">
    <property type="entry name" value="Ribosomal_uS10"/>
</dbReference>
<dbReference type="InterPro" id="IPR018268">
    <property type="entry name" value="Ribosomal_uS10_CS"/>
</dbReference>
<dbReference type="InterPro" id="IPR027486">
    <property type="entry name" value="Ribosomal_uS10_dom"/>
</dbReference>
<dbReference type="InterPro" id="IPR036838">
    <property type="entry name" value="Ribosomal_uS10_dom_sf"/>
</dbReference>
<dbReference type="NCBIfam" id="NF001861">
    <property type="entry name" value="PRK00596.1"/>
    <property type="match status" value="1"/>
</dbReference>
<dbReference type="NCBIfam" id="TIGR01049">
    <property type="entry name" value="rpsJ_bact"/>
    <property type="match status" value="1"/>
</dbReference>
<dbReference type="PANTHER" id="PTHR11700">
    <property type="entry name" value="30S RIBOSOMAL PROTEIN S10 FAMILY MEMBER"/>
    <property type="match status" value="1"/>
</dbReference>
<dbReference type="Pfam" id="PF00338">
    <property type="entry name" value="Ribosomal_S10"/>
    <property type="match status" value="1"/>
</dbReference>
<dbReference type="PRINTS" id="PR00971">
    <property type="entry name" value="RIBOSOMALS10"/>
</dbReference>
<dbReference type="SMART" id="SM01403">
    <property type="entry name" value="Ribosomal_S10"/>
    <property type="match status" value="1"/>
</dbReference>
<dbReference type="SUPFAM" id="SSF54999">
    <property type="entry name" value="Ribosomal protein S10"/>
    <property type="match status" value="1"/>
</dbReference>
<dbReference type="PROSITE" id="PS00361">
    <property type="entry name" value="RIBOSOMAL_S10"/>
    <property type="match status" value="1"/>
</dbReference>
<organism>
    <name type="scientific">Paracidovorax citrulli (strain AAC00-1)</name>
    <name type="common">Acidovorax citrulli</name>
    <dbReference type="NCBI Taxonomy" id="397945"/>
    <lineage>
        <taxon>Bacteria</taxon>
        <taxon>Pseudomonadati</taxon>
        <taxon>Pseudomonadota</taxon>
        <taxon>Betaproteobacteria</taxon>
        <taxon>Burkholderiales</taxon>
        <taxon>Comamonadaceae</taxon>
        <taxon>Paracidovorax</taxon>
    </lineage>
</organism>
<name>RS10_PARC0</name>
<proteinExistence type="inferred from homology"/>
<protein>
    <recommendedName>
        <fullName evidence="1">Small ribosomal subunit protein uS10</fullName>
    </recommendedName>
    <alternativeName>
        <fullName evidence="2">30S ribosomal protein S10</fullName>
    </alternativeName>
</protein>
<reference key="1">
    <citation type="submission" date="2006-12" db="EMBL/GenBank/DDBJ databases">
        <title>Complete sequence of Acidovorax avenae subsp. citrulli AAC00-1.</title>
        <authorList>
            <person name="Copeland A."/>
            <person name="Lucas S."/>
            <person name="Lapidus A."/>
            <person name="Barry K."/>
            <person name="Detter J.C."/>
            <person name="Glavina del Rio T."/>
            <person name="Dalin E."/>
            <person name="Tice H."/>
            <person name="Pitluck S."/>
            <person name="Kiss H."/>
            <person name="Brettin T."/>
            <person name="Bruce D."/>
            <person name="Han C."/>
            <person name="Tapia R."/>
            <person name="Gilna P."/>
            <person name="Schmutz J."/>
            <person name="Larimer F."/>
            <person name="Land M."/>
            <person name="Hauser L."/>
            <person name="Kyrpides N."/>
            <person name="Kim E."/>
            <person name="Stahl D."/>
            <person name="Richardson P."/>
        </authorList>
    </citation>
    <scope>NUCLEOTIDE SEQUENCE [LARGE SCALE GENOMIC DNA]</scope>
    <source>
        <strain>AAC00-1</strain>
    </source>
</reference>
<gene>
    <name evidence="1" type="primary">rpsJ</name>
    <name type="ordered locus">Aave_0337</name>
</gene>